<evidence type="ECO:0000255" key="1"/>
<evidence type="ECO:0000256" key="2">
    <source>
        <dbReference type="SAM" id="MobiDB-lite"/>
    </source>
</evidence>
<evidence type="ECO:0000269" key="3">
    <source>
    </source>
</evidence>
<gene>
    <name type="ordered locus">YNL143C</name>
    <name type="ORF">N1206</name>
    <name type="ORF">N1795</name>
</gene>
<comment type="subcellular location">
    <subcellularLocation>
        <location>Membrane</location>
        <topology>Multi-pass membrane protein</topology>
    </subcellularLocation>
</comment>
<comment type="miscellaneous">
    <text evidence="3">Present with 238 molecules/cell in log phase SD medium.</text>
</comment>
<reference key="1">
    <citation type="journal article" date="1995" name="Yeast">
        <title>A 43.5 kb segment of yeast chromosome XIV, which contains MFA2, MEP2, CAP/SRV2, NAM9, FKB1/FPR1/RBP1, MOM22 and CPT1, predicts an adenosine deaminase gene and 14 new open reading frames.</title>
        <authorList>
            <person name="Mallet L."/>
            <person name="Bussereau F."/>
            <person name="Jacquet M."/>
        </authorList>
    </citation>
    <scope>NUCLEOTIDE SEQUENCE [GENOMIC DNA]</scope>
    <source>
        <strain>ATCC 204508 / S288c</strain>
    </source>
</reference>
<reference key="2">
    <citation type="journal article" date="1997" name="Nature">
        <title>The nucleotide sequence of Saccharomyces cerevisiae chromosome XIV and its evolutionary implications.</title>
        <authorList>
            <person name="Philippsen P."/>
            <person name="Kleine K."/>
            <person name="Poehlmann R."/>
            <person name="Duesterhoeft A."/>
            <person name="Hamberg K."/>
            <person name="Hegemann J.H."/>
            <person name="Obermaier B."/>
            <person name="Urrestarazu L.A."/>
            <person name="Aert R."/>
            <person name="Albermann K."/>
            <person name="Altmann R."/>
            <person name="Andre B."/>
            <person name="Baladron V."/>
            <person name="Ballesta J.P.G."/>
            <person name="Becam A.-M."/>
            <person name="Beinhauer J.D."/>
            <person name="Boskovic J."/>
            <person name="Buitrago M.J."/>
            <person name="Bussereau F."/>
            <person name="Coster F."/>
            <person name="Crouzet M."/>
            <person name="D'Angelo M."/>
            <person name="Dal Pero F."/>
            <person name="De Antoni A."/>
            <person name="del Rey F."/>
            <person name="Doignon F."/>
            <person name="Domdey H."/>
            <person name="Dubois E."/>
            <person name="Fiedler T.A."/>
            <person name="Fleig U."/>
            <person name="Floeth M."/>
            <person name="Fritz C."/>
            <person name="Gaillardin C."/>
            <person name="Garcia-Cantalejo J.M."/>
            <person name="Glansdorff N."/>
            <person name="Goffeau A."/>
            <person name="Gueldener U."/>
            <person name="Herbert C.J."/>
            <person name="Heumann K."/>
            <person name="Heuss-Neitzel D."/>
            <person name="Hilbert H."/>
            <person name="Hinni K."/>
            <person name="Iraqui Houssaini I."/>
            <person name="Jacquet M."/>
            <person name="Jimenez A."/>
            <person name="Jonniaux J.-L."/>
            <person name="Karpfinger-Hartl L."/>
            <person name="Lanfranchi G."/>
            <person name="Lepingle A."/>
            <person name="Levesque H."/>
            <person name="Lyck R."/>
            <person name="Maftahi M."/>
            <person name="Mallet L."/>
            <person name="Maurer C.T.C."/>
            <person name="Messenguy F."/>
            <person name="Mewes H.-W."/>
            <person name="Moestl D."/>
            <person name="Nasr F."/>
            <person name="Nicaud J.-M."/>
            <person name="Niedenthal R.K."/>
            <person name="Pandolfo D."/>
            <person name="Pierard A."/>
            <person name="Piravandi E."/>
            <person name="Planta R.J."/>
            <person name="Pohl T.M."/>
            <person name="Purnelle B."/>
            <person name="Rebischung C."/>
            <person name="Remacha M.A."/>
            <person name="Revuelta J.L."/>
            <person name="Rinke M."/>
            <person name="Saiz J.E."/>
            <person name="Sartorello F."/>
            <person name="Scherens B."/>
            <person name="Sen-Gupta M."/>
            <person name="Soler-Mira A."/>
            <person name="Urbanus J.H.M."/>
            <person name="Valle G."/>
            <person name="Van Dyck L."/>
            <person name="Verhasselt P."/>
            <person name="Vierendeels F."/>
            <person name="Vissers S."/>
            <person name="Voet M."/>
            <person name="Volckaert G."/>
            <person name="Wach A."/>
            <person name="Wambutt R."/>
            <person name="Wedler H."/>
            <person name="Zollner A."/>
            <person name="Hani J."/>
        </authorList>
    </citation>
    <scope>NUCLEOTIDE SEQUENCE [LARGE SCALE GENOMIC DNA]</scope>
    <source>
        <strain>ATCC 204508 / S288c</strain>
    </source>
</reference>
<reference key="3">
    <citation type="journal article" date="2014" name="G3 (Bethesda)">
        <title>The reference genome sequence of Saccharomyces cerevisiae: Then and now.</title>
        <authorList>
            <person name="Engel S.R."/>
            <person name="Dietrich F.S."/>
            <person name="Fisk D.G."/>
            <person name="Binkley G."/>
            <person name="Balakrishnan R."/>
            <person name="Costanzo M.C."/>
            <person name="Dwight S.S."/>
            <person name="Hitz B.C."/>
            <person name="Karra K."/>
            <person name="Nash R.S."/>
            <person name="Weng S."/>
            <person name="Wong E.D."/>
            <person name="Lloyd P."/>
            <person name="Skrzypek M.S."/>
            <person name="Miyasato S.R."/>
            <person name="Simison M."/>
            <person name="Cherry J.M."/>
        </authorList>
    </citation>
    <scope>GENOME REANNOTATION</scope>
    <source>
        <strain>ATCC 204508 / S288c</strain>
    </source>
</reference>
<reference key="4">
    <citation type="journal article" date="2003" name="Nature">
        <title>Global analysis of protein expression in yeast.</title>
        <authorList>
            <person name="Ghaemmaghami S."/>
            <person name="Huh W.-K."/>
            <person name="Bower K."/>
            <person name="Howson R.W."/>
            <person name="Belle A."/>
            <person name="Dephoure N."/>
            <person name="O'Shea E.K."/>
            <person name="Weissman J.S."/>
        </authorList>
    </citation>
    <scope>LEVEL OF PROTEIN EXPRESSION [LARGE SCALE ANALYSIS]</scope>
</reference>
<reference key="5">
    <citation type="journal article" date="2006" name="Proc. Natl. Acad. Sci. U.S.A.">
        <title>A global topology map of the Saccharomyces cerevisiae membrane proteome.</title>
        <authorList>
            <person name="Kim H."/>
            <person name="Melen K."/>
            <person name="Oesterberg M."/>
            <person name="von Heijne G."/>
        </authorList>
    </citation>
    <scope>TOPOLOGY [LARGE SCALE ANALYSIS]</scope>
    <source>
        <strain>ATCC 208353 / W303-1A</strain>
    </source>
</reference>
<sequence>MREQLKLFTREIVDFTFLILSGFDYYQTLLISSNSSKKRPKDSSLLSEKKKKKKKKKKDVLSYLSYLKDLPFVPFLFWQPGYSQREKNPRQHSLFIMTITKPGMISMADMNYVVSKNRSLNRPAERGGNR</sequence>
<organism>
    <name type="scientific">Saccharomyces cerevisiae (strain ATCC 204508 / S288c)</name>
    <name type="common">Baker's yeast</name>
    <dbReference type="NCBI Taxonomy" id="559292"/>
    <lineage>
        <taxon>Eukaryota</taxon>
        <taxon>Fungi</taxon>
        <taxon>Dikarya</taxon>
        <taxon>Ascomycota</taxon>
        <taxon>Saccharomycotina</taxon>
        <taxon>Saccharomycetes</taxon>
        <taxon>Saccharomycetales</taxon>
        <taxon>Saccharomycetaceae</taxon>
        <taxon>Saccharomyces</taxon>
    </lineage>
</organism>
<protein>
    <recommendedName>
        <fullName>Uncharacterized membrane protein YNL143C</fullName>
    </recommendedName>
</protein>
<proteinExistence type="evidence at protein level"/>
<feature type="chain" id="PRO_0000203424" description="Uncharacterized membrane protein YNL143C">
    <location>
        <begin position="1"/>
        <end position="130"/>
    </location>
</feature>
<feature type="topological domain" description="Cytoplasmic" evidence="1">
    <location>
        <begin position="1"/>
        <end position="58"/>
    </location>
</feature>
<feature type="transmembrane region" description="Helical" evidence="1">
    <location>
        <begin position="59"/>
        <end position="79"/>
    </location>
</feature>
<feature type="topological domain" description="Extracellular" evidence="1">
    <location>
        <begin position="80"/>
        <end position="94"/>
    </location>
</feature>
<feature type="transmembrane region" description="Helical" evidence="1">
    <location>
        <begin position="95"/>
        <end position="115"/>
    </location>
</feature>
<feature type="topological domain" description="Cytoplasmic" evidence="1">
    <location>
        <begin position="116"/>
        <end position="130"/>
    </location>
</feature>
<feature type="region of interest" description="Disordered" evidence="2">
    <location>
        <begin position="34"/>
        <end position="57"/>
    </location>
</feature>
<name>YNO3_YEAST</name>
<accession>P53908</accession>
<accession>I2HB72</accession>
<dbReference type="EMBL" id="Z46843">
    <property type="protein sequence ID" value="CAA86883.1"/>
    <property type="molecule type" value="Genomic_DNA"/>
</dbReference>
<dbReference type="EMBL" id="Z71419">
    <property type="protein sequence ID" value="CAA96026.1"/>
    <property type="molecule type" value="Genomic_DNA"/>
</dbReference>
<dbReference type="EMBL" id="BK006947">
    <property type="protein sequence ID" value="DAA35133.1"/>
    <property type="molecule type" value="Genomic_DNA"/>
</dbReference>
<dbReference type="PIR" id="S55141">
    <property type="entry name" value="S55141"/>
</dbReference>
<dbReference type="RefSeq" id="NP_001257688.1">
    <property type="nucleotide sequence ID" value="NM_001270759.1"/>
</dbReference>
<dbReference type="BioGRID" id="300855">
    <property type="interactions" value="26"/>
</dbReference>
<dbReference type="FunCoup" id="P53908">
    <property type="interactions" value="25"/>
</dbReference>
<dbReference type="STRING" id="4932.YNL143C"/>
<dbReference type="PaxDb" id="4932-YNL143C"/>
<dbReference type="EnsemblFungi" id="YNL143C_mRNA">
    <property type="protein sequence ID" value="YNL143C"/>
    <property type="gene ID" value="YNL143C"/>
</dbReference>
<dbReference type="GeneID" id="855579"/>
<dbReference type="KEGG" id="sce:YNL143C"/>
<dbReference type="AGR" id="SGD:S000005087"/>
<dbReference type="SGD" id="S000005087">
    <property type="gene designation" value="YNL143C"/>
</dbReference>
<dbReference type="VEuPathDB" id="FungiDB:YNL143C"/>
<dbReference type="HOGENOM" id="CLU_1939755_0_0_1"/>
<dbReference type="InParanoid" id="P53908"/>
<dbReference type="OrthoDB" id="10511453at2759"/>
<dbReference type="BioCyc" id="YEAST:G3O-33161-MONOMER"/>
<dbReference type="BioGRID-ORCS" id="855579">
    <property type="hits" value="0 hits in 10 CRISPR screens"/>
</dbReference>
<dbReference type="PRO" id="PR:P53908"/>
<dbReference type="Proteomes" id="UP000002311">
    <property type="component" value="Chromosome XIV"/>
</dbReference>
<dbReference type="RNAct" id="P53908">
    <property type="molecule type" value="protein"/>
</dbReference>
<dbReference type="GO" id="GO:0016020">
    <property type="term" value="C:membrane"/>
    <property type="evidence" value="ECO:0007669"/>
    <property type="project" value="UniProtKB-SubCell"/>
</dbReference>
<keyword id="KW-0472">Membrane</keyword>
<keyword id="KW-1185">Reference proteome</keyword>
<keyword id="KW-0812">Transmembrane</keyword>
<keyword id="KW-1133">Transmembrane helix</keyword>